<accession>P14723</accession>
<name>YWIS_WHEAT</name>
<keyword id="KW-1185">Reference proteome</keyword>
<keyword id="KW-0814">Transposable element</keyword>
<dbReference type="EMBL" id="X15870">
    <property type="protein sequence ID" value="CAA33880.1"/>
    <property type="molecule type" value="Genomic_DNA"/>
</dbReference>
<dbReference type="PIR" id="S10084">
    <property type="entry name" value="S10084"/>
</dbReference>
<dbReference type="EnsemblPlants" id="TraesCS6B02G349600.1">
    <property type="protein sequence ID" value="TraesCS6B02G349600.1.cds1"/>
    <property type="gene ID" value="TraesCS6B02G349600"/>
</dbReference>
<dbReference type="EnsemblPlants" id="TraesCS6B03G0985500.1">
    <property type="protein sequence ID" value="TraesCS6B03G0985500.1.CDS1"/>
    <property type="gene ID" value="TraesCS6B03G0985500"/>
</dbReference>
<dbReference type="EnsemblPlants" id="TraesNOR6B03G03629530.1">
    <property type="protein sequence ID" value="TraesNOR6B03G03629530.1.CDS1"/>
    <property type="gene ID" value="TraesNOR6B03G03629530"/>
</dbReference>
<dbReference type="Gramene" id="TraesCS6B02G349600.1">
    <property type="protein sequence ID" value="TraesCS6B02G349600.1.cds1"/>
    <property type="gene ID" value="TraesCS6B02G349600"/>
</dbReference>
<dbReference type="Gramene" id="TraesCS6B03G0985500.1">
    <property type="protein sequence ID" value="TraesCS6B03G0985500.1.CDS1"/>
    <property type="gene ID" value="TraesCS6B03G0985500"/>
</dbReference>
<dbReference type="Gramene" id="TraesNOR6B03G03629530.1">
    <property type="protein sequence ID" value="TraesNOR6B03G03629530.1.CDS1"/>
    <property type="gene ID" value="TraesNOR6B03G03629530"/>
</dbReference>
<dbReference type="Proteomes" id="UP000019116">
    <property type="component" value="Chromosome 6B"/>
</dbReference>
<sequence length="151" mass="15950">MDRNHAARNSAPLPLSAAHILLPSPSLSSPAPSPQLRSLSCTTSAAATPVPVPHHCLRCCDPPPPPPPPTPSPSISLLPFPFSDGPRLALNPVIPDDHFSSEMDTTTGGALRCRNQHLFLLQPAGQNAGTGPAQKLKTDETRCYERRGGSQ</sequence>
<organism>
    <name type="scientific">Triticum aestivum</name>
    <name type="common">Wheat</name>
    <dbReference type="NCBI Taxonomy" id="4565"/>
    <lineage>
        <taxon>Eukaryota</taxon>
        <taxon>Viridiplantae</taxon>
        <taxon>Streptophyta</taxon>
        <taxon>Embryophyta</taxon>
        <taxon>Tracheophyta</taxon>
        <taxon>Spermatophyta</taxon>
        <taxon>Magnoliopsida</taxon>
        <taxon>Liliopsida</taxon>
        <taxon>Poales</taxon>
        <taxon>Poaceae</taxon>
        <taxon>BOP clade</taxon>
        <taxon>Pooideae</taxon>
        <taxon>Triticodae</taxon>
        <taxon>Triticeae</taxon>
        <taxon>Triticinae</taxon>
        <taxon>Triticum</taxon>
    </lineage>
</organism>
<feature type="chain" id="PRO_0000066548" description="Uncharacterized 16 kDa protein in middle repetitive insertion sequence WIS1">
    <location>
        <begin position="1"/>
        <end position="151"/>
    </location>
</feature>
<feature type="region of interest" description="Disordered" evidence="1">
    <location>
        <begin position="123"/>
        <end position="151"/>
    </location>
</feature>
<feature type="compositionally biased region" description="Basic and acidic residues" evidence="1">
    <location>
        <begin position="136"/>
        <end position="151"/>
    </location>
</feature>
<evidence type="ECO:0000256" key="1">
    <source>
        <dbReference type="SAM" id="MobiDB-lite"/>
    </source>
</evidence>
<protein>
    <recommendedName>
        <fullName>Uncharacterized 16 kDa protein in middle repetitive insertion sequence WIS1</fullName>
    </recommendedName>
</protein>
<reference key="1">
    <citation type="journal article" date="1989" name="Mol. Gen. Genet.">
        <title>An unusual wheat insertion sequence (WIS1) lies upstream of an alpha-amylase gene in hexaploid wheat, and carries a 'minisatellite' array.</title>
        <authorList>
            <person name="Martienssen R.A."/>
            <person name="Baulcombe D.C."/>
        </authorList>
    </citation>
    <scope>NUCLEOTIDE SEQUENCE [GENOMIC DNA]</scope>
    <source>
        <strain>cv. Chinese Spring</strain>
    </source>
</reference>
<proteinExistence type="predicted"/>